<comment type="catalytic activity">
    <reaction evidence="1">
        <text>tRNA(Gly) + glycine + ATP = glycyl-tRNA(Gly) + AMP + diphosphate</text>
        <dbReference type="Rhea" id="RHEA:16013"/>
        <dbReference type="Rhea" id="RHEA-COMP:9664"/>
        <dbReference type="Rhea" id="RHEA-COMP:9683"/>
        <dbReference type="ChEBI" id="CHEBI:30616"/>
        <dbReference type="ChEBI" id="CHEBI:33019"/>
        <dbReference type="ChEBI" id="CHEBI:57305"/>
        <dbReference type="ChEBI" id="CHEBI:78442"/>
        <dbReference type="ChEBI" id="CHEBI:78522"/>
        <dbReference type="ChEBI" id="CHEBI:456215"/>
        <dbReference type="EC" id="6.1.1.14"/>
    </reaction>
</comment>
<comment type="subunit">
    <text evidence="1">Tetramer of two alpha and two beta subunits.</text>
</comment>
<comment type="subcellular location">
    <subcellularLocation>
        <location evidence="1">Cytoplasm</location>
    </subcellularLocation>
</comment>
<comment type="similarity">
    <text evidence="1">Belongs to the class-II aminoacyl-tRNA synthetase family.</text>
</comment>
<comment type="sequence caution" evidence="2">
    <conflict type="erroneous initiation">
        <sequence resource="EMBL-CDS" id="ABS77223"/>
    </conflict>
</comment>
<organism>
    <name type="scientific">Coxiella burnetii (strain Dugway 5J108-111)</name>
    <dbReference type="NCBI Taxonomy" id="434922"/>
    <lineage>
        <taxon>Bacteria</taxon>
        <taxon>Pseudomonadati</taxon>
        <taxon>Pseudomonadota</taxon>
        <taxon>Gammaproteobacteria</taxon>
        <taxon>Legionellales</taxon>
        <taxon>Coxiellaceae</taxon>
        <taxon>Coxiella</taxon>
    </lineage>
</organism>
<protein>
    <recommendedName>
        <fullName evidence="1">Glycine--tRNA ligase beta subunit</fullName>
        <ecNumber evidence="1">6.1.1.14</ecNumber>
    </recommendedName>
    <alternativeName>
        <fullName evidence="1">Glycyl-tRNA synthetase beta subunit</fullName>
        <shortName evidence="1">GlyRS</shortName>
    </alternativeName>
</protein>
<name>SYGB_COXBN</name>
<reference key="1">
    <citation type="journal article" date="2009" name="Infect. Immun.">
        <title>Comparative genomics reveal extensive transposon-mediated genomic plasticity and diversity among potential effector proteins within the genus Coxiella.</title>
        <authorList>
            <person name="Beare P.A."/>
            <person name="Unsworth N."/>
            <person name="Andoh M."/>
            <person name="Voth D.E."/>
            <person name="Omsland A."/>
            <person name="Gilk S.D."/>
            <person name="Williams K.P."/>
            <person name="Sobral B.W."/>
            <person name="Kupko J.J. III"/>
            <person name="Porcella S.F."/>
            <person name="Samuel J.E."/>
            <person name="Heinzen R.A."/>
        </authorList>
    </citation>
    <scope>NUCLEOTIDE SEQUENCE [LARGE SCALE GENOMIC DNA]</scope>
    <source>
        <strain>Dugway 5J108-111</strain>
    </source>
</reference>
<sequence>MTTQDFLLEIGCEELPPRRLNQLSQALSQTIKSELEKADLSFENIHRYATPRRLAVLVNNLALQQPQRKIERQGPSVKAAFDKDQTPTLACFGFAQSCGVSTAQLKVKKTKKGEFIYCEIEQPGQNTLDLLPNIIQSALKQLPTPKAMRWGDHKEFFVRPVHWIILMLGKDLVPATLLGKMASCETRGHRFHHPKNILVTKPDDYQKLLLTHGMVIADFEKRREKIRDLIQKAASEKGEAIIDEGLLEEVTGMVEWPVILVGNFKAEFLELPPEVLITTMKVHQRTFPIKNKNGDLLPYFIIVSNIESKNPKRVIVGNERVINARLADASFFYDNDLRTSLENRLPKLGDVIFQRQLGTLADKARRIEKLAAFIAKQINIDEQLAARAGLLSKCDLVSEMVYEFPTLQGIMGYYYAFHDKEPPLVAEAIKEHYLPRFSGDQLPRNLLSACVAVADRIDTIIGIIGINKSPTGDKDPFALRRAALGILRILIEKELSLDLFALLNEAKNNYAVELPNVNVANQSFDFIIERLRAWYLEKEVPASVFMAVLASHPADPLDFDRRIKAVQHFQTLPEADALAAANKRVSNILKKQAAELKSKTIDHSLFDSDAEHLLADQLKERAELVNNLYKKADYTKALSELASLKEPIDIFFDKVMVMVDDKEKRENRLALLSSLQQLFSQIADISLLS</sequence>
<accession>A9KBT7</accession>
<gene>
    <name evidence="1" type="primary">glyS</name>
    <name type="ordered locus">CBUD_0207</name>
</gene>
<dbReference type="EC" id="6.1.1.14" evidence="1"/>
<dbReference type="EMBL" id="CP000733">
    <property type="protein sequence ID" value="ABS77223.2"/>
    <property type="status" value="ALT_INIT"/>
    <property type="molecule type" value="Genomic_DNA"/>
</dbReference>
<dbReference type="RefSeq" id="WP_043880992.1">
    <property type="nucleotide sequence ID" value="NC_009727.1"/>
</dbReference>
<dbReference type="SMR" id="A9KBT7"/>
<dbReference type="KEGG" id="cbd:CBUD_0207"/>
<dbReference type="HOGENOM" id="CLU_007220_2_2_6"/>
<dbReference type="Proteomes" id="UP000008555">
    <property type="component" value="Chromosome"/>
</dbReference>
<dbReference type="GO" id="GO:0005829">
    <property type="term" value="C:cytosol"/>
    <property type="evidence" value="ECO:0007669"/>
    <property type="project" value="TreeGrafter"/>
</dbReference>
<dbReference type="GO" id="GO:0004814">
    <property type="term" value="F:arginine-tRNA ligase activity"/>
    <property type="evidence" value="ECO:0007669"/>
    <property type="project" value="InterPro"/>
</dbReference>
<dbReference type="GO" id="GO:0005524">
    <property type="term" value="F:ATP binding"/>
    <property type="evidence" value="ECO:0007669"/>
    <property type="project" value="UniProtKB-UniRule"/>
</dbReference>
<dbReference type="GO" id="GO:0004820">
    <property type="term" value="F:glycine-tRNA ligase activity"/>
    <property type="evidence" value="ECO:0007669"/>
    <property type="project" value="UniProtKB-UniRule"/>
</dbReference>
<dbReference type="GO" id="GO:0006420">
    <property type="term" value="P:arginyl-tRNA aminoacylation"/>
    <property type="evidence" value="ECO:0007669"/>
    <property type="project" value="InterPro"/>
</dbReference>
<dbReference type="GO" id="GO:0006426">
    <property type="term" value="P:glycyl-tRNA aminoacylation"/>
    <property type="evidence" value="ECO:0007669"/>
    <property type="project" value="UniProtKB-UniRule"/>
</dbReference>
<dbReference type="Gene3D" id="1.10.730.10">
    <property type="entry name" value="Isoleucyl-tRNA Synthetase, Domain 1"/>
    <property type="match status" value="1"/>
</dbReference>
<dbReference type="HAMAP" id="MF_00255">
    <property type="entry name" value="Gly_tRNA_synth_beta"/>
    <property type="match status" value="1"/>
</dbReference>
<dbReference type="InterPro" id="IPR008909">
    <property type="entry name" value="DALR_anticod-bd"/>
</dbReference>
<dbReference type="InterPro" id="IPR015944">
    <property type="entry name" value="Gly-tRNA-synth_bsu"/>
</dbReference>
<dbReference type="InterPro" id="IPR006194">
    <property type="entry name" value="Gly-tRNA-synth_heterodimer"/>
</dbReference>
<dbReference type="NCBIfam" id="TIGR00211">
    <property type="entry name" value="glyS"/>
    <property type="match status" value="1"/>
</dbReference>
<dbReference type="PANTHER" id="PTHR30075:SF2">
    <property type="entry name" value="GLYCINE--TRNA LIGASE, CHLOROPLASTIC_MITOCHONDRIAL 2"/>
    <property type="match status" value="1"/>
</dbReference>
<dbReference type="PANTHER" id="PTHR30075">
    <property type="entry name" value="GLYCYL-TRNA SYNTHETASE"/>
    <property type="match status" value="1"/>
</dbReference>
<dbReference type="Pfam" id="PF05746">
    <property type="entry name" value="DALR_1"/>
    <property type="match status" value="1"/>
</dbReference>
<dbReference type="Pfam" id="PF02092">
    <property type="entry name" value="tRNA_synt_2f"/>
    <property type="match status" value="1"/>
</dbReference>
<dbReference type="PRINTS" id="PR01045">
    <property type="entry name" value="TRNASYNTHGB"/>
</dbReference>
<dbReference type="SUPFAM" id="SSF109604">
    <property type="entry name" value="HD-domain/PDEase-like"/>
    <property type="match status" value="1"/>
</dbReference>
<dbReference type="PROSITE" id="PS50861">
    <property type="entry name" value="AA_TRNA_LIGASE_II_GLYAB"/>
    <property type="match status" value="1"/>
</dbReference>
<evidence type="ECO:0000255" key="1">
    <source>
        <dbReference type="HAMAP-Rule" id="MF_00255"/>
    </source>
</evidence>
<evidence type="ECO:0000305" key="2"/>
<proteinExistence type="inferred from homology"/>
<keyword id="KW-0030">Aminoacyl-tRNA synthetase</keyword>
<keyword id="KW-0067">ATP-binding</keyword>
<keyword id="KW-0963">Cytoplasm</keyword>
<keyword id="KW-0436">Ligase</keyword>
<keyword id="KW-0547">Nucleotide-binding</keyword>
<keyword id="KW-0648">Protein biosynthesis</keyword>
<feature type="chain" id="PRO_1000078539" description="Glycine--tRNA ligase beta subunit">
    <location>
        <begin position="1"/>
        <end position="689"/>
    </location>
</feature>